<proteinExistence type="inferred from homology"/>
<protein>
    <recommendedName>
        <fullName evidence="1">NAD(P)H-quinone oxidoreductase subunit I, chloroplastic</fullName>
        <ecNumber evidence="1">7.1.1.-</ecNumber>
    </recommendedName>
    <alternativeName>
        <fullName evidence="1">NAD(P)H dehydrogenase subunit I</fullName>
        <shortName evidence="1">NDH subunit I</shortName>
    </alternativeName>
    <alternativeName>
        <fullName evidence="1">NADH-plastoquinone oxidoreductase subunit I</fullName>
    </alternativeName>
</protein>
<gene>
    <name evidence="1" type="primary">ndhI</name>
</gene>
<sequence>MFPMVTEFMNYGQQTVRAARYIGQGFMITLSHANRLPVTIQYPYEKLITSERFRGRIHFEFDKCIACEVCVRVCPIDLPVVDWKLETDIRKKRLLNYSIDFGICIFCGNCVEYCPTNCLSMTEEYELSTYDRHELNYNQIALGRLPMSIIDDYTIRTILNLPEIKT</sequence>
<comment type="function">
    <text evidence="1">NDH shuttles electrons from NAD(P)H:plastoquinone, via FMN and iron-sulfur (Fe-S) centers, to quinones in the photosynthetic chain and possibly in a chloroplast respiratory chain. The immediate electron acceptor for the enzyme in this species is believed to be plastoquinone. Couples the redox reaction to proton translocation, and thus conserves the redox energy in a proton gradient.</text>
</comment>
<comment type="catalytic activity">
    <reaction evidence="1">
        <text>a plastoquinone + NADH + (n+1) H(+)(in) = a plastoquinol + NAD(+) + n H(+)(out)</text>
        <dbReference type="Rhea" id="RHEA:42608"/>
        <dbReference type="Rhea" id="RHEA-COMP:9561"/>
        <dbReference type="Rhea" id="RHEA-COMP:9562"/>
        <dbReference type="ChEBI" id="CHEBI:15378"/>
        <dbReference type="ChEBI" id="CHEBI:17757"/>
        <dbReference type="ChEBI" id="CHEBI:57540"/>
        <dbReference type="ChEBI" id="CHEBI:57945"/>
        <dbReference type="ChEBI" id="CHEBI:62192"/>
    </reaction>
</comment>
<comment type="catalytic activity">
    <reaction evidence="1">
        <text>a plastoquinone + NADPH + (n+1) H(+)(in) = a plastoquinol + NADP(+) + n H(+)(out)</text>
        <dbReference type="Rhea" id="RHEA:42612"/>
        <dbReference type="Rhea" id="RHEA-COMP:9561"/>
        <dbReference type="Rhea" id="RHEA-COMP:9562"/>
        <dbReference type="ChEBI" id="CHEBI:15378"/>
        <dbReference type="ChEBI" id="CHEBI:17757"/>
        <dbReference type="ChEBI" id="CHEBI:57783"/>
        <dbReference type="ChEBI" id="CHEBI:58349"/>
        <dbReference type="ChEBI" id="CHEBI:62192"/>
    </reaction>
</comment>
<comment type="cofactor">
    <cofactor evidence="1">
        <name>[4Fe-4S] cluster</name>
        <dbReference type="ChEBI" id="CHEBI:49883"/>
    </cofactor>
    <text evidence="1">Binds 2 [4Fe-4S] clusters per subunit.</text>
</comment>
<comment type="subunit">
    <text evidence="1">NDH is composed of at least 16 different subunits, 5 of which are encoded in the nucleus.</text>
</comment>
<comment type="subcellular location">
    <subcellularLocation>
        <location evidence="1">Plastid</location>
        <location evidence="1">Chloroplast thylakoid membrane</location>
        <topology evidence="1">Peripheral membrane protein</topology>
    </subcellularLocation>
</comment>
<comment type="similarity">
    <text evidence="1">Belongs to the complex I 23 kDa subunit family.</text>
</comment>
<geneLocation type="chloroplast"/>
<accession>Q8HVQ7</accession>
<feature type="chain" id="PRO_0000250806" description="NAD(P)H-quinone oxidoreductase subunit I, chloroplastic">
    <location>
        <begin position="1"/>
        <end position="166"/>
    </location>
</feature>
<feature type="domain" description="4Fe-4S ferredoxin-type 1" evidence="1">
    <location>
        <begin position="55"/>
        <end position="84"/>
    </location>
</feature>
<feature type="domain" description="4Fe-4S ferredoxin-type 2" evidence="1">
    <location>
        <begin position="95"/>
        <end position="124"/>
    </location>
</feature>
<feature type="binding site" evidence="1">
    <location>
        <position position="64"/>
    </location>
    <ligand>
        <name>[4Fe-4S] cluster</name>
        <dbReference type="ChEBI" id="CHEBI:49883"/>
        <label>1</label>
    </ligand>
</feature>
<feature type="binding site" evidence="1">
    <location>
        <position position="67"/>
    </location>
    <ligand>
        <name>[4Fe-4S] cluster</name>
        <dbReference type="ChEBI" id="CHEBI:49883"/>
        <label>1</label>
    </ligand>
</feature>
<feature type="binding site" evidence="1">
    <location>
        <position position="70"/>
    </location>
    <ligand>
        <name>[4Fe-4S] cluster</name>
        <dbReference type="ChEBI" id="CHEBI:49883"/>
        <label>1</label>
    </ligand>
</feature>
<feature type="binding site" evidence="1">
    <location>
        <position position="74"/>
    </location>
    <ligand>
        <name>[4Fe-4S] cluster</name>
        <dbReference type="ChEBI" id="CHEBI:49883"/>
        <label>2</label>
    </ligand>
</feature>
<feature type="binding site" evidence="1">
    <location>
        <position position="104"/>
    </location>
    <ligand>
        <name>[4Fe-4S] cluster</name>
        <dbReference type="ChEBI" id="CHEBI:49883"/>
        <label>2</label>
    </ligand>
</feature>
<feature type="binding site" evidence="1">
    <location>
        <position position="107"/>
    </location>
    <ligand>
        <name>[4Fe-4S] cluster</name>
        <dbReference type="ChEBI" id="CHEBI:49883"/>
        <label>2</label>
    </ligand>
</feature>
<feature type="binding site" evidence="1">
    <location>
        <position position="110"/>
    </location>
    <ligand>
        <name>[4Fe-4S] cluster</name>
        <dbReference type="ChEBI" id="CHEBI:49883"/>
        <label>2</label>
    </ligand>
</feature>
<feature type="binding site" evidence="1">
    <location>
        <position position="114"/>
    </location>
    <ligand>
        <name>[4Fe-4S] cluster</name>
        <dbReference type="ChEBI" id="CHEBI:49883"/>
        <label>1</label>
    </ligand>
</feature>
<name>NDHI_KINPA</name>
<reference key="1">
    <citation type="submission" date="2003-01" db="EMBL/GenBank/DDBJ databases">
        <title>Chloroplast DNA phylogeny of tribe Heliantheae (Asteraceae).</title>
        <authorList>
            <person name="Panero J.L."/>
            <person name="Baldwin B.G."/>
            <person name="Schilling E.E."/>
            <person name="Clevinger J.A."/>
        </authorList>
    </citation>
    <scope>NUCLEOTIDE SEQUENCE [GENOMIC DNA]</scope>
</reference>
<organism>
    <name type="scientific">Kingianthus paradoxus</name>
    <dbReference type="NCBI Taxonomy" id="183037"/>
    <lineage>
        <taxon>Eukaryota</taxon>
        <taxon>Viridiplantae</taxon>
        <taxon>Streptophyta</taxon>
        <taxon>Embryophyta</taxon>
        <taxon>Tracheophyta</taxon>
        <taxon>Spermatophyta</taxon>
        <taxon>Magnoliopsida</taxon>
        <taxon>eudicotyledons</taxon>
        <taxon>Gunneridae</taxon>
        <taxon>Pentapetalae</taxon>
        <taxon>asterids</taxon>
        <taxon>campanulids</taxon>
        <taxon>Asterales</taxon>
        <taxon>Asteraceae</taxon>
        <taxon>Asteroideae</taxon>
        <taxon>Heliantheae alliance</taxon>
        <taxon>Heliantheae</taxon>
        <taxon>Kingianthus</taxon>
    </lineage>
</organism>
<keyword id="KW-0004">4Fe-4S</keyword>
<keyword id="KW-0150">Chloroplast</keyword>
<keyword id="KW-0408">Iron</keyword>
<keyword id="KW-0411">Iron-sulfur</keyword>
<keyword id="KW-0472">Membrane</keyword>
<keyword id="KW-0479">Metal-binding</keyword>
<keyword id="KW-0520">NAD</keyword>
<keyword id="KW-0521">NADP</keyword>
<keyword id="KW-0934">Plastid</keyword>
<keyword id="KW-0618">Plastoquinone</keyword>
<keyword id="KW-0874">Quinone</keyword>
<keyword id="KW-0677">Repeat</keyword>
<keyword id="KW-0793">Thylakoid</keyword>
<keyword id="KW-1278">Translocase</keyword>
<evidence type="ECO:0000255" key="1">
    <source>
        <dbReference type="HAMAP-Rule" id="MF_01351"/>
    </source>
</evidence>
<dbReference type="EC" id="7.1.1.-" evidence="1"/>
<dbReference type="EMBL" id="AF383806">
    <property type="protein sequence ID" value="AAN61747.1"/>
    <property type="molecule type" value="Genomic_DNA"/>
</dbReference>
<dbReference type="SMR" id="Q8HVQ7"/>
<dbReference type="GO" id="GO:0009535">
    <property type="term" value="C:chloroplast thylakoid membrane"/>
    <property type="evidence" value="ECO:0007669"/>
    <property type="project" value="UniProtKB-SubCell"/>
</dbReference>
<dbReference type="GO" id="GO:0051539">
    <property type="term" value="F:4 iron, 4 sulfur cluster binding"/>
    <property type="evidence" value="ECO:0007669"/>
    <property type="project" value="UniProtKB-KW"/>
</dbReference>
<dbReference type="GO" id="GO:0005506">
    <property type="term" value="F:iron ion binding"/>
    <property type="evidence" value="ECO:0007669"/>
    <property type="project" value="UniProtKB-UniRule"/>
</dbReference>
<dbReference type="GO" id="GO:0008137">
    <property type="term" value="F:NADH dehydrogenase (ubiquinone) activity"/>
    <property type="evidence" value="ECO:0007669"/>
    <property type="project" value="InterPro"/>
</dbReference>
<dbReference type="GO" id="GO:0048038">
    <property type="term" value="F:quinone binding"/>
    <property type="evidence" value="ECO:0007669"/>
    <property type="project" value="UniProtKB-KW"/>
</dbReference>
<dbReference type="GO" id="GO:0019684">
    <property type="term" value="P:photosynthesis, light reaction"/>
    <property type="evidence" value="ECO:0007669"/>
    <property type="project" value="UniProtKB-UniRule"/>
</dbReference>
<dbReference type="FunFam" id="3.30.70.3270:FF:000006">
    <property type="entry name" value="NAD(P)H-quinone oxidoreductase subunit I, chloroplastic"/>
    <property type="match status" value="1"/>
</dbReference>
<dbReference type="Gene3D" id="3.30.70.3270">
    <property type="match status" value="1"/>
</dbReference>
<dbReference type="HAMAP" id="MF_01351">
    <property type="entry name" value="NDH1_NuoI"/>
    <property type="match status" value="1"/>
</dbReference>
<dbReference type="InterPro" id="IPR017896">
    <property type="entry name" value="4Fe4S_Fe-S-bd"/>
</dbReference>
<dbReference type="InterPro" id="IPR017900">
    <property type="entry name" value="4Fe4S_Fe_S_CS"/>
</dbReference>
<dbReference type="InterPro" id="IPR010226">
    <property type="entry name" value="NADH_quinone_OxRdtase_chainI"/>
</dbReference>
<dbReference type="InterPro" id="IPR004497">
    <property type="entry name" value="NDHI"/>
</dbReference>
<dbReference type="NCBIfam" id="TIGR00403">
    <property type="entry name" value="ndhI"/>
    <property type="match status" value="1"/>
</dbReference>
<dbReference type="NCBIfam" id="TIGR01971">
    <property type="entry name" value="NuoI"/>
    <property type="match status" value="1"/>
</dbReference>
<dbReference type="NCBIfam" id="NF004537">
    <property type="entry name" value="PRK05888.1-3"/>
    <property type="match status" value="1"/>
</dbReference>
<dbReference type="PANTHER" id="PTHR47275">
    <property type="entry name" value="NAD(P)H-QUINONE OXIDOREDUCTASE SUBUNIT I, CHLOROPLASTIC"/>
    <property type="match status" value="1"/>
</dbReference>
<dbReference type="PANTHER" id="PTHR47275:SF1">
    <property type="entry name" value="NAD(P)H-QUINONE OXIDOREDUCTASE SUBUNIT I, CHLOROPLASTIC"/>
    <property type="match status" value="1"/>
</dbReference>
<dbReference type="Pfam" id="PF00037">
    <property type="entry name" value="Fer4"/>
    <property type="match status" value="2"/>
</dbReference>
<dbReference type="SUPFAM" id="SSF54862">
    <property type="entry name" value="4Fe-4S ferredoxins"/>
    <property type="match status" value="1"/>
</dbReference>
<dbReference type="PROSITE" id="PS00198">
    <property type="entry name" value="4FE4S_FER_1"/>
    <property type="match status" value="2"/>
</dbReference>
<dbReference type="PROSITE" id="PS51379">
    <property type="entry name" value="4FE4S_FER_2"/>
    <property type="match status" value="2"/>
</dbReference>